<reference key="1">
    <citation type="journal article" date="2006" name="Proc. Natl. Acad. Sci. U.S.A.">
        <title>Comparative genomics of the lactic acid bacteria.</title>
        <authorList>
            <person name="Makarova K.S."/>
            <person name="Slesarev A."/>
            <person name="Wolf Y.I."/>
            <person name="Sorokin A."/>
            <person name="Mirkin B."/>
            <person name="Koonin E.V."/>
            <person name="Pavlov A."/>
            <person name="Pavlova N."/>
            <person name="Karamychev V."/>
            <person name="Polouchine N."/>
            <person name="Shakhova V."/>
            <person name="Grigoriev I."/>
            <person name="Lou Y."/>
            <person name="Rohksar D."/>
            <person name="Lucas S."/>
            <person name="Huang K."/>
            <person name="Goodstein D.M."/>
            <person name="Hawkins T."/>
            <person name="Plengvidhya V."/>
            <person name="Welker D."/>
            <person name="Hughes J."/>
            <person name="Goh Y."/>
            <person name="Benson A."/>
            <person name="Baldwin K."/>
            <person name="Lee J.-H."/>
            <person name="Diaz-Muniz I."/>
            <person name="Dosti B."/>
            <person name="Smeianov V."/>
            <person name="Wechter W."/>
            <person name="Barabote R."/>
            <person name="Lorca G."/>
            <person name="Altermann E."/>
            <person name="Barrangou R."/>
            <person name="Ganesan B."/>
            <person name="Xie Y."/>
            <person name="Rawsthorne H."/>
            <person name="Tamir D."/>
            <person name="Parker C."/>
            <person name="Breidt F."/>
            <person name="Broadbent J.R."/>
            <person name="Hutkins R."/>
            <person name="O'Sullivan D."/>
            <person name="Steele J."/>
            <person name="Unlu G."/>
            <person name="Saier M.H. Jr."/>
            <person name="Klaenhammer T."/>
            <person name="Richardson P."/>
            <person name="Kozyavkin S."/>
            <person name="Weimer B.C."/>
            <person name="Mills D.A."/>
        </authorList>
    </citation>
    <scope>NUCLEOTIDE SEQUENCE [LARGE SCALE GENOMIC DNA]</scope>
    <source>
        <strain>ATCC 367 / BCRC 12310 / CIP 105137 / JCM 1170 / LMG 11437 / NCIMB 947 / NCTC 947</strain>
    </source>
</reference>
<accession>Q03QA0</accession>
<name>Y1527_LEVBA</name>
<sequence>MNTDLLVTTTEHIPGKEYEVIGEVFGLTTQSKNVLRNMGAALKNVVGGEIKDYTKMLDEARNISVDRLRKNARDMGADAVVMMRFDSGSIGTDMQSVAAYGTAVKYV</sequence>
<feature type="chain" id="PRO_1000120001" description="UPF0145 protein LVIS_1527">
    <location>
        <begin position="1"/>
        <end position="107"/>
    </location>
</feature>
<evidence type="ECO:0000255" key="1">
    <source>
        <dbReference type="HAMAP-Rule" id="MF_00338"/>
    </source>
</evidence>
<protein>
    <recommendedName>
        <fullName evidence="1">UPF0145 protein LVIS_1527</fullName>
    </recommendedName>
</protein>
<gene>
    <name type="ordered locus">LVIS_1527</name>
</gene>
<dbReference type="EMBL" id="CP000416">
    <property type="protein sequence ID" value="ABJ64622.1"/>
    <property type="molecule type" value="Genomic_DNA"/>
</dbReference>
<dbReference type="RefSeq" id="WP_011668248.1">
    <property type="nucleotide sequence ID" value="NC_008497.1"/>
</dbReference>
<dbReference type="SMR" id="Q03QA0"/>
<dbReference type="KEGG" id="lbr:LVIS_1527"/>
<dbReference type="eggNOG" id="COG0393">
    <property type="taxonomic scope" value="Bacteria"/>
</dbReference>
<dbReference type="HOGENOM" id="CLU_117144_1_2_9"/>
<dbReference type="Proteomes" id="UP000001652">
    <property type="component" value="Chromosome"/>
</dbReference>
<dbReference type="Gene3D" id="3.30.110.70">
    <property type="entry name" value="Hypothetical protein apc22750. Chain B"/>
    <property type="match status" value="1"/>
</dbReference>
<dbReference type="HAMAP" id="MF_00338">
    <property type="entry name" value="UPF0145"/>
    <property type="match status" value="1"/>
</dbReference>
<dbReference type="InterPro" id="IPR035439">
    <property type="entry name" value="UPF0145_dom_sf"/>
</dbReference>
<dbReference type="InterPro" id="IPR002765">
    <property type="entry name" value="UPF0145_YbjQ-like"/>
</dbReference>
<dbReference type="PANTHER" id="PTHR34068:SF2">
    <property type="entry name" value="UPF0145 PROTEIN SCO3412"/>
    <property type="match status" value="1"/>
</dbReference>
<dbReference type="PANTHER" id="PTHR34068">
    <property type="entry name" value="UPF0145 PROTEIN YBJQ"/>
    <property type="match status" value="1"/>
</dbReference>
<dbReference type="Pfam" id="PF01906">
    <property type="entry name" value="YbjQ_1"/>
    <property type="match status" value="1"/>
</dbReference>
<dbReference type="SUPFAM" id="SSF117782">
    <property type="entry name" value="YbjQ-like"/>
    <property type="match status" value="1"/>
</dbReference>
<proteinExistence type="inferred from homology"/>
<comment type="similarity">
    <text evidence="1">Belongs to the UPF0145 family.</text>
</comment>
<organism>
    <name type="scientific">Levilactobacillus brevis (strain ATCC 367 / BCRC 12310 / CIP 105137 / JCM 1170 / LMG 11437 / NCIMB 947 / NCTC 947)</name>
    <name type="common">Lactobacillus brevis</name>
    <dbReference type="NCBI Taxonomy" id="387344"/>
    <lineage>
        <taxon>Bacteria</taxon>
        <taxon>Bacillati</taxon>
        <taxon>Bacillota</taxon>
        <taxon>Bacilli</taxon>
        <taxon>Lactobacillales</taxon>
        <taxon>Lactobacillaceae</taxon>
        <taxon>Levilactobacillus</taxon>
    </lineage>
</organism>
<keyword id="KW-1185">Reference proteome</keyword>